<organism>
    <name type="scientific">Synechocystis sp. (strain ATCC 27184 / PCC 6803 / Kazusa)</name>
    <dbReference type="NCBI Taxonomy" id="1111708"/>
    <lineage>
        <taxon>Bacteria</taxon>
        <taxon>Bacillati</taxon>
        <taxon>Cyanobacteriota</taxon>
        <taxon>Cyanophyceae</taxon>
        <taxon>Synechococcales</taxon>
        <taxon>Merismopediaceae</taxon>
        <taxon>Synechocystis</taxon>
    </lineage>
</organism>
<name>Y1045_SYNY3</name>
<dbReference type="EMBL" id="BA000022">
    <property type="protein sequence ID" value="BAA17029.1"/>
    <property type="molecule type" value="Genomic_DNA"/>
</dbReference>
<dbReference type="PIR" id="S74989">
    <property type="entry name" value="S74989"/>
</dbReference>
<dbReference type="SMR" id="P73009"/>
<dbReference type="IntAct" id="P73009">
    <property type="interactions" value="9"/>
</dbReference>
<dbReference type="STRING" id="1148.gene:10497890"/>
<dbReference type="PaxDb" id="1148-1652104"/>
<dbReference type="EnsemblBacteria" id="BAA17029">
    <property type="protein sequence ID" value="BAA17029"/>
    <property type="gene ID" value="BAA17029"/>
</dbReference>
<dbReference type="KEGG" id="syn:slr1045"/>
<dbReference type="eggNOG" id="COG0767">
    <property type="taxonomic scope" value="Bacteria"/>
</dbReference>
<dbReference type="InParanoid" id="P73009"/>
<dbReference type="PhylomeDB" id="P73009"/>
<dbReference type="Proteomes" id="UP000001425">
    <property type="component" value="Chromosome"/>
</dbReference>
<dbReference type="GO" id="GO:0043190">
    <property type="term" value="C:ATP-binding cassette (ABC) transporter complex"/>
    <property type="evidence" value="ECO:0007669"/>
    <property type="project" value="InterPro"/>
</dbReference>
<dbReference type="GO" id="GO:0005886">
    <property type="term" value="C:plasma membrane"/>
    <property type="evidence" value="ECO:0000318"/>
    <property type="project" value="GO_Central"/>
</dbReference>
<dbReference type="GO" id="GO:0005548">
    <property type="term" value="F:phospholipid transporter activity"/>
    <property type="evidence" value="ECO:0000318"/>
    <property type="project" value="GO_Central"/>
</dbReference>
<dbReference type="GO" id="GO:0015914">
    <property type="term" value="P:phospholipid transport"/>
    <property type="evidence" value="ECO:0000318"/>
    <property type="project" value="GO_Central"/>
</dbReference>
<dbReference type="InterPro" id="IPR003453">
    <property type="entry name" value="ABC_MlaE_roteobac"/>
</dbReference>
<dbReference type="InterPro" id="IPR030802">
    <property type="entry name" value="Permease_MalE"/>
</dbReference>
<dbReference type="NCBIfam" id="TIGR00056">
    <property type="entry name" value="MlaE family lipid ABC transporter permease subunit"/>
    <property type="match status" value="1"/>
</dbReference>
<dbReference type="PANTHER" id="PTHR30188">
    <property type="entry name" value="ABC TRANSPORTER PERMEASE PROTEIN-RELATED"/>
    <property type="match status" value="1"/>
</dbReference>
<dbReference type="PANTHER" id="PTHR30188:SF4">
    <property type="entry name" value="PROTEIN TRIGALACTOSYLDIACYLGLYCEROL 1, CHLOROPLASTIC"/>
    <property type="match status" value="1"/>
</dbReference>
<dbReference type="Pfam" id="PF02405">
    <property type="entry name" value="MlaE"/>
    <property type="match status" value="1"/>
</dbReference>
<sequence length="263" mass="28242">MSDRGSRHSLSLWFQRLVAAFFLTGQVFLHILQGRINRRNTLEQMNMVGPESMAIALITAGFVGMVFTIQVAREFIYYGATTTIGGVLSLSLTRELAPVLTAVVIAGRVGSAFAAEIGTMRVTEQLDALYMLRTDPIDYLVVPRVIACGLMLPILTGLSLFVGMAGGLVISSSLYAINPTIFLNSVQNFTQLWDVFACLFKSLVFGVIIAIIGCSWGLTTTGGAKGVGESTTTAVVTSLLAIFISNFFLSWLMFQGTGDTALG</sequence>
<accession>P73009</accession>
<protein>
    <recommendedName>
        <fullName>Probable ABC transporter permease protein slr1045</fullName>
    </recommendedName>
</protein>
<keyword id="KW-1003">Cell membrane</keyword>
<keyword id="KW-0472">Membrane</keyword>
<keyword id="KW-1185">Reference proteome</keyword>
<keyword id="KW-0812">Transmembrane</keyword>
<keyword id="KW-1133">Transmembrane helix</keyword>
<keyword id="KW-0813">Transport</keyword>
<proteinExistence type="inferred from homology"/>
<comment type="function">
    <text evidence="1">Could be part of an ABC transporter complex.</text>
</comment>
<comment type="subcellular location">
    <subcellularLocation>
        <location evidence="1">Cell membrane</location>
        <topology evidence="1">Multi-pass membrane protein</topology>
    </subcellularLocation>
</comment>
<comment type="similarity">
    <text evidence="3">Belongs to the MlaE permease family.</text>
</comment>
<evidence type="ECO:0000250" key="1"/>
<evidence type="ECO:0000255" key="2"/>
<evidence type="ECO:0000305" key="3"/>
<gene>
    <name type="ordered locus">slr1045</name>
</gene>
<reference key="1">
    <citation type="journal article" date="1996" name="DNA Res.">
        <title>Sequence analysis of the genome of the unicellular cyanobacterium Synechocystis sp. strain PCC6803. II. Sequence determination of the entire genome and assignment of potential protein-coding regions.</title>
        <authorList>
            <person name="Kaneko T."/>
            <person name="Sato S."/>
            <person name="Kotani H."/>
            <person name="Tanaka A."/>
            <person name="Asamizu E."/>
            <person name="Nakamura Y."/>
            <person name="Miyajima N."/>
            <person name="Hirosawa M."/>
            <person name="Sugiura M."/>
            <person name="Sasamoto S."/>
            <person name="Kimura T."/>
            <person name="Hosouchi T."/>
            <person name="Matsuno A."/>
            <person name="Muraki A."/>
            <person name="Nakazaki N."/>
            <person name="Naruo K."/>
            <person name="Okumura S."/>
            <person name="Shimpo S."/>
            <person name="Takeuchi C."/>
            <person name="Wada T."/>
            <person name="Watanabe A."/>
            <person name="Yamada M."/>
            <person name="Yasuda M."/>
            <person name="Tabata S."/>
        </authorList>
    </citation>
    <scope>NUCLEOTIDE SEQUENCE [LARGE SCALE GENOMIC DNA]</scope>
    <source>
        <strain>ATCC 27184 / PCC 6803 / Kazusa</strain>
    </source>
</reference>
<feature type="chain" id="PRO_0000277460" description="Probable ABC transporter permease protein slr1045">
    <location>
        <begin position="1"/>
        <end position="263"/>
    </location>
</feature>
<feature type="transmembrane region" description="Helical" evidence="2">
    <location>
        <begin position="12"/>
        <end position="32"/>
    </location>
</feature>
<feature type="transmembrane region" description="Helical" evidence="2">
    <location>
        <begin position="52"/>
        <end position="72"/>
    </location>
</feature>
<feature type="transmembrane region" description="Helical" evidence="2">
    <location>
        <begin position="97"/>
        <end position="117"/>
    </location>
</feature>
<feature type="transmembrane region" description="Helical" evidence="2">
    <location>
        <begin position="140"/>
        <end position="162"/>
    </location>
</feature>
<feature type="transmembrane region" description="Helical" evidence="2">
    <location>
        <begin position="167"/>
        <end position="186"/>
    </location>
</feature>
<feature type="transmembrane region" description="Helical" evidence="2">
    <location>
        <begin position="192"/>
        <end position="212"/>
    </location>
</feature>
<feature type="transmembrane region" description="Helical" evidence="2">
    <location>
        <begin position="234"/>
        <end position="254"/>
    </location>
</feature>